<keyword id="KW-0002">3D-structure</keyword>
<keyword id="KW-0963">Cytoplasm</keyword>
<keyword id="KW-0479">Metal-binding</keyword>
<keyword id="KW-0484">Methanogenesis</keyword>
<keyword id="KW-0488">Methylation</keyword>
<keyword id="KW-0533">Nickel</keyword>
<keyword id="KW-1185">Reference proteome</keyword>
<keyword id="KW-0808">Transferase</keyword>
<dbReference type="EC" id="2.8.4.1" evidence="1"/>
<dbReference type="EMBL" id="L77117">
    <property type="protein sequence ID" value="AAB98851.1"/>
    <property type="molecule type" value="Genomic_DNA"/>
</dbReference>
<dbReference type="EMBL" id="AF414040">
    <property type="protein sequence ID" value="AAL29289.1"/>
    <property type="molecule type" value="Genomic_DNA"/>
</dbReference>
<dbReference type="RefSeq" id="WP_010870360.1">
    <property type="nucleotide sequence ID" value="NC_000909.1"/>
</dbReference>
<dbReference type="PDB" id="6PEU">
    <property type="method" value="X-ray"/>
    <property type="resolution" value="1.95 A"/>
    <property type="chains" value="M/N/P/Q=442-453"/>
</dbReference>
<dbReference type="PDBsum" id="6PEU"/>
<dbReference type="SMR" id="Q58256"/>
<dbReference type="FunCoup" id="Q58256">
    <property type="interactions" value="94"/>
</dbReference>
<dbReference type="STRING" id="243232.MJ_0846"/>
<dbReference type="PaxDb" id="243232-MJ_0846"/>
<dbReference type="EnsemblBacteria" id="AAB98851">
    <property type="protein sequence ID" value="AAB98851"/>
    <property type="gene ID" value="MJ_0846"/>
</dbReference>
<dbReference type="GeneID" id="1451734"/>
<dbReference type="KEGG" id="mja:MJ_0846"/>
<dbReference type="eggNOG" id="arCOG04857">
    <property type="taxonomic scope" value="Archaea"/>
</dbReference>
<dbReference type="HOGENOM" id="CLU_493170_0_0_2"/>
<dbReference type="InParanoid" id="Q58256"/>
<dbReference type="OrthoDB" id="52468at2157"/>
<dbReference type="PhylomeDB" id="Q58256"/>
<dbReference type="UniPathway" id="UPA00646">
    <property type="reaction ID" value="UER00699"/>
</dbReference>
<dbReference type="Proteomes" id="UP000000805">
    <property type="component" value="Chromosome"/>
</dbReference>
<dbReference type="GO" id="GO:0005737">
    <property type="term" value="C:cytoplasm"/>
    <property type="evidence" value="ECO:0007669"/>
    <property type="project" value="UniProtKB-SubCell"/>
</dbReference>
<dbReference type="GO" id="GO:0050524">
    <property type="term" value="F:coenzyme-B sulfoethylthiotransferase activity"/>
    <property type="evidence" value="ECO:0007669"/>
    <property type="project" value="UniProtKB-EC"/>
</dbReference>
<dbReference type="GO" id="GO:0046872">
    <property type="term" value="F:metal ion binding"/>
    <property type="evidence" value="ECO:0007669"/>
    <property type="project" value="UniProtKB-KW"/>
</dbReference>
<dbReference type="GO" id="GO:0015948">
    <property type="term" value="P:methanogenesis"/>
    <property type="evidence" value="ECO:0007669"/>
    <property type="project" value="UniProtKB-KW"/>
</dbReference>
<dbReference type="Gene3D" id="3.30.70.470">
    <property type="match status" value="1"/>
</dbReference>
<dbReference type="Gene3D" id="1.20.840.10">
    <property type="entry name" value="Methyl-coenzyme M reductase, alpha/beta subunit, C-terminal"/>
    <property type="match status" value="1"/>
</dbReference>
<dbReference type="Gene3D" id="3.90.390.10">
    <property type="entry name" value="Methyl-coenzyme M Reductase, Chain A, domain 1"/>
    <property type="match status" value="1"/>
</dbReference>
<dbReference type="InterPro" id="IPR016212">
    <property type="entry name" value="Me_CoM_Rdtase_asu"/>
</dbReference>
<dbReference type="InterPro" id="IPR008924">
    <property type="entry name" value="Me_CoM_Rdtase_asu/bsu_C"/>
</dbReference>
<dbReference type="InterPro" id="IPR009047">
    <property type="entry name" value="Me_CoM_Rdtase_asu_C"/>
</dbReference>
<dbReference type="InterPro" id="IPR003183">
    <property type="entry name" value="Me_CoM_Rdtase_asu_N"/>
</dbReference>
<dbReference type="InterPro" id="IPR015811">
    <property type="entry name" value="Me_CoM_Rdtase_asu_N_sub1"/>
</dbReference>
<dbReference type="InterPro" id="IPR015823">
    <property type="entry name" value="Me_CoM_Rdtase_asu_N_sub2"/>
</dbReference>
<dbReference type="InterPro" id="IPR009024">
    <property type="entry name" value="Me_CoM_Rdtase_Fd-like_fold"/>
</dbReference>
<dbReference type="NCBIfam" id="TIGR03256">
    <property type="entry name" value="met_CoM_red_alp"/>
    <property type="match status" value="1"/>
</dbReference>
<dbReference type="Pfam" id="PF02249">
    <property type="entry name" value="MCR_alpha"/>
    <property type="match status" value="1"/>
</dbReference>
<dbReference type="Pfam" id="PF02745">
    <property type="entry name" value="MCR_alpha_N"/>
    <property type="match status" value="1"/>
</dbReference>
<dbReference type="PIRSF" id="PIRSF000262">
    <property type="entry name" value="MCR_alpha"/>
    <property type="match status" value="1"/>
</dbReference>
<dbReference type="SUPFAM" id="SSF48081">
    <property type="entry name" value="Methyl-coenzyme M reductase alpha and beta chain C-terminal domain"/>
    <property type="match status" value="1"/>
</dbReference>
<dbReference type="SUPFAM" id="SSF55088">
    <property type="entry name" value="Methyl-coenzyme M reductase subunits"/>
    <property type="match status" value="1"/>
</dbReference>
<comment type="function">
    <text evidence="1">Component of the methyl-coenzyme M reductase (MCR) I that catalyzes the reductive cleavage of methyl-coenzyme M (CoM-S-CH3 or 2-(methylthio)ethanesulfonate) using coenzyme B (CoB or 7-mercaptoheptanoylthreonine phosphate) as reductant which results in the production of methane and the mixed heterodisulfide of CoB and CoM (CoM-S-S-CoB). This is the final step in methanogenesis.</text>
</comment>
<comment type="catalytic activity">
    <reaction evidence="1">
        <text>coenzyme B + methyl-coenzyme M = methane + coenzyme M-coenzyme B heterodisulfide</text>
        <dbReference type="Rhea" id="RHEA:12532"/>
        <dbReference type="ChEBI" id="CHEBI:16183"/>
        <dbReference type="ChEBI" id="CHEBI:58286"/>
        <dbReference type="ChEBI" id="CHEBI:58411"/>
        <dbReference type="ChEBI" id="CHEBI:58596"/>
        <dbReference type="EC" id="2.8.4.1"/>
    </reaction>
    <physiologicalReaction direction="left-to-right" evidence="1">
        <dbReference type="Rhea" id="RHEA:12533"/>
    </physiologicalReaction>
</comment>
<comment type="cofactor">
    <cofactor evidence="1">
        <name>coenzyme F430</name>
        <dbReference type="ChEBI" id="CHEBI:60540"/>
    </cofactor>
    <text evidence="1">Binds 2 coenzyme F430 non-covalently per MCR complex. Coenzyme F430 is a yellow nickel porphinoid. Methyl-coenzyme-M reductase is activated when the enzyme-bound coenzyme F430 is reduced to the Ni(I) oxidation state.</text>
</comment>
<comment type="pathway">
    <text evidence="1">One-carbon metabolism; methyl-coenzyme M reduction; methane from methyl-coenzyme M: step 1/1.</text>
</comment>
<comment type="subunit">
    <text evidence="1">MCR is a hexamer of two alpha, two beta, and two gamma chains, forming a dimer of heterotrimers.</text>
</comment>
<comment type="subcellular location">
    <subcellularLocation>
        <location evidence="1">Cytoplasm</location>
    </subcellularLocation>
</comment>
<comment type="PTM">
    <text evidence="2">Is methylated on C5 of Arg-274 by the methyltransferase MJ0841. This post-translational methylation, despite being not essential in vivo, plays a role for the stability and structural integrity of MCR.</text>
</comment>
<comment type="similarity">
    <text evidence="3">Belongs to the methyl-coenzyme M reductase alpha subunit family.</text>
</comment>
<evidence type="ECO:0000250" key="1">
    <source>
        <dbReference type="UniProtKB" id="P11558"/>
    </source>
</evidence>
<evidence type="ECO:0000250" key="2">
    <source>
        <dbReference type="UniProtKB" id="Q8THH1"/>
    </source>
</evidence>
<evidence type="ECO:0000305" key="3"/>
<proteinExistence type="evidence at protein level"/>
<gene>
    <name type="primary">mcrA</name>
    <name type="ordered locus">MJ0846</name>
</gene>
<protein>
    <recommendedName>
        <fullName>Methyl-coenzyme M reductase I subunit alpha</fullName>
        <shortName>MCR I alpha</shortName>
        <ecNumber evidence="1">2.8.4.1</ecNumber>
    </recommendedName>
    <alternativeName>
        <fullName>Coenzyme-B sulfoethylthiotransferase alpha</fullName>
    </alternativeName>
</protein>
<sequence>MDAEKRLFLKALKEKFEEDPREKYTKFYVFGGWRQSARKREFVEAAQKLIEKRGGIPFYNPDIGVPLGQRKLMPYKVSNTDAIVEGDDLHFMNNAAMQQFWDDIRRTVIVGMDTAHAVLEKRLGVEVTPETINEYMETINHALPGGAVVQEHMVEVHPALVWDCYAKIFTGDDELADEIDKRFLIDINKLFPEEQAEQIKKAIGKRTYQVSRVPTLVGRVCDGGTIARWSAMQIGMSFITAYKLCAGEAAIADFSYAAKHADVIQMASFLPARRARGPNEPGGIFFGVLADIVQTSRVSDDPVEQSLEVVAAGAMLYDQIWLGGYMSGGVGFTQYATATYTDDILDDFSYYGYDYITKKYGGCNSVKPTMDVVEDIATEVTLYGLEQYDTFPALLEDHFGGSQRAGVTAAAAGITTALATGNSNAGVNGWYLSQILHKEYHSRLGFYGYDLQDQCGAANSLSFRNDEGSPLELRGPNYPNYAMNVGHQGEYAGITQAAHSARGDAFALNPLIKVAFADPSLVFDFTHPRKEFARGALREFEPAGERDPIIPAH</sequence>
<name>MCRA_METJA</name>
<accession>Q58256</accession>
<accession>Q977G8</accession>
<reference key="1">
    <citation type="journal article" date="1996" name="Science">
        <title>Complete genome sequence of the methanogenic archaeon, Methanococcus jannaschii.</title>
        <authorList>
            <person name="Bult C.J."/>
            <person name="White O."/>
            <person name="Olsen G.J."/>
            <person name="Zhou L."/>
            <person name="Fleischmann R.D."/>
            <person name="Sutton G.G."/>
            <person name="Blake J.A."/>
            <person name="FitzGerald L.M."/>
            <person name="Clayton R.A."/>
            <person name="Gocayne J.D."/>
            <person name="Kerlavage A.R."/>
            <person name="Dougherty B.A."/>
            <person name="Tomb J.-F."/>
            <person name="Adams M.D."/>
            <person name="Reich C.I."/>
            <person name="Overbeek R."/>
            <person name="Kirkness E.F."/>
            <person name="Weinstock K.G."/>
            <person name="Merrick J.M."/>
            <person name="Glodek A."/>
            <person name="Scott J.L."/>
            <person name="Geoghagen N.S.M."/>
            <person name="Weidman J.F."/>
            <person name="Fuhrmann J.L."/>
            <person name="Nguyen D."/>
            <person name="Utterback T.R."/>
            <person name="Kelley J.M."/>
            <person name="Peterson J.D."/>
            <person name="Sadow P.W."/>
            <person name="Hanna M.C."/>
            <person name="Cotton M.D."/>
            <person name="Roberts K.M."/>
            <person name="Hurst M.A."/>
            <person name="Kaine B.P."/>
            <person name="Borodovsky M."/>
            <person name="Klenk H.-P."/>
            <person name="Fraser C.M."/>
            <person name="Smith H.O."/>
            <person name="Woese C.R."/>
            <person name="Venter J.C."/>
        </authorList>
    </citation>
    <scope>NUCLEOTIDE SEQUENCE [LARGE SCALE GENOMIC DNA]</scope>
    <source>
        <strain>ATCC 43067 / DSM 2661 / JAL-1 / JCM 10045 / NBRC 100440</strain>
    </source>
</reference>
<reference key="2">
    <citation type="journal article" date="2002" name="Microbiology">
        <title>The mcrA gene as an alternative to 16S rRNA in the phylogenetic analysis of methanogen populations in landfill.</title>
        <authorList>
            <person name="Luton P.E."/>
            <person name="Wayne J.M."/>
            <person name="Sharp R.J."/>
            <person name="Riley P.W."/>
        </authorList>
    </citation>
    <scope>NUCLEOTIDE SEQUENCE [GENOMIC DNA] OF 340-478</scope>
    <source>
        <strain>ATCC 43067 / DSM 2661 / JAL-1 / JCM 10045 / NBRC 100440</strain>
    </source>
</reference>
<organism>
    <name type="scientific">Methanocaldococcus jannaschii (strain ATCC 43067 / DSM 2661 / JAL-1 / JCM 10045 / NBRC 100440)</name>
    <name type="common">Methanococcus jannaschii</name>
    <dbReference type="NCBI Taxonomy" id="243232"/>
    <lineage>
        <taxon>Archaea</taxon>
        <taxon>Methanobacteriati</taxon>
        <taxon>Methanobacteriota</taxon>
        <taxon>Methanomada group</taxon>
        <taxon>Methanococci</taxon>
        <taxon>Methanococcales</taxon>
        <taxon>Methanocaldococcaceae</taxon>
        <taxon>Methanocaldococcus</taxon>
    </lineage>
</organism>
<feature type="chain" id="PRO_0000147452" description="Methyl-coenzyme M reductase I subunit alpha">
    <location>
        <begin position="1"/>
        <end position="553"/>
    </location>
</feature>
<feature type="binding site" description="axial binding residue" evidence="1">
    <location>
        <position position="150"/>
    </location>
    <ligand>
        <name>coenzyme F430</name>
        <dbReference type="ChEBI" id="CHEBI:60540"/>
    </ligand>
    <ligandPart>
        <name>Ni</name>
        <dbReference type="ChEBI" id="CHEBI:28112"/>
    </ligandPart>
</feature>
<feature type="binding site" description="in chain A" evidence="1">
    <location>
        <position position="228"/>
    </location>
    <ligand>
        <name>coenzyme B</name>
        <dbReference type="ChEBI" id="CHEBI:58596"/>
        <note>ligand shared between two alpha subunits</note>
    </ligand>
</feature>
<feature type="binding site" description="in chain A" evidence="1">
    <location>
        <begin position="259"/>
        <end position="260"/>
    </location>
    <ligand>
        <name>coenzyme B</name>
        <dbReference type="ChEBI" id="CHEBI:58596"/>
        <note>ligand shared between two alpha subunits</note>
    </ligand>
</feature>
<feature type="binding site" description="in chain B" evidence="1">
    <location>
        <position position="273"/>
    </location>
    <ligand>
        <name>coenzyme B</name>
        <dbReference type="ChEBI" id="CHEBI:58596"/>
        <note>ligand shared between two alpha subunits</note>
    </ligand>
</feature>
<feature type="binding site" evidence="1">
    <location>
        <position position="335"/>
    </location>
    <ligand>
        <name>coenzyme M</name>
        <dbReference type="ChEBI" id="CHEBI:58319"/>
    </ligand>
</feature>
<feature type="binding site" evidence="1">
    <location>
        <position position="447"/>
    </location>
    <ligand>
        <name>coenzyme M</name>
        <dbReference type="ChEBI" id="CHEBI:58319"/>
    </ligand>
</feature>
<feature type="modified residue" description="5-methylarginine" evidence="2">
    <location>
        <position position="274"/>
    </location>
</feature>
<feature type="sequence conflict" description="In Ref. 2; AAL29289." evidence="3" ref="2">
    <original>N</original>
    <variation>F</variation>
    <location>
        <position position="424"/>
    </location>
</feature>